<gene>
    <name type="primary">CPA1</name>
    <name type="ordered locus">YALI0D07370g</name>
</gene>
<evidence type="ECO:0000250" key="1">
    <source>
        <dbReference type="UniProtKB" id="P22572"/>
    </source>
</evidence>
<evidence type="ECO:0000255" key="2"/>
<evidence type="ECO:0000255" key="3">
    <source>
        <dbReference type="PROSITE-ProRule" id="PRU00605"/>
    </source>
</evidence>
<evidence type="ECO:0000305" key="4"/>
<sequence>MFKNIARLASMARSAPRTTASFQTRFMATTASGTASASATPATFTLQNGPVFTGRSFGANRVVSGEAVFSTGMVGYPESMTDPSYRGQILVFTQPLIGNYGVPSGKETDPFGLIKYFESPHIQCIGIVVADAALKYSHWTAVESLGEWCKREGVAAISGVDTRAIVTYLREQGSSLGRITVGEEYDAEEDAAFVDPGEINLVRRVSTKQPFHVSAAADVENPLHIAVIDCGVKENILRSLVSRGASITVFPYEYPINDIAHHFDGIFISNGPGDPTHCQQTVLNLRDIMYEKPELSELPIFGICLGHQLLALAAGAKTVKLKYGNRAHNIPALDLTTGQCHITSQNHGYAVDVNTLPAEFKPYFINLNDQSNEGMIHTEKPIFSTQFHPEAKGGPLDTSILFDKYLGQVHQYRAARKSGVDTRPNKLLVDLLPKQRIGVEIDAWDYVQ</sequence>
<protein>
    <recommendedName>
        <fullName>Carbamoyl phosphate synthase arginine-specific small chain</fullName>
        <shortName>CPS</shortName>
        <shortName>CPSase</shortName>
        <ecNumber evidence="1">6.3.5.5</ecNumber>
    </recommendedName>
    <alternativeName>
        <fullName>Arginine-specific carbamoyl phosphate synthetase, glutamine chain</fullName>
    </alternativeName>
    <alternativeName>
        <fullName>Glutamine-dependent carbamoyl phosphate synthetase</fullName>
    </alternativeName>
</protein>
<proteinExistence type="inferred from homology"/>
<reference key="1">
    <citation type="journal article" date="2004" name="Nature">
        <title>Genome evolution in yeasts.</title>
        <authorList>
            <person name="Dujon B."/>
            <person name="Sherman D."/>
            <person name="Fischer G."/>
            <person name="Durrens P."/>
            <person name="Casaregola S."/>
            <person name="Lafontaine I."/>
            <person name="de Montigny J."/>
            <person name="Marck C."/>
            <person name="Neuveglise C."/>
            <person name="Talla E."/>
            <person name="Goffard N."/>
            <person name="Frangeul L."/>
            <person name="Aigle M."/>
            <person name="Anthouard V."/>
            <person name="Babour A."/>
            <person name="Barbe V."/>
            <person name="Barnay S."/>
            <person name="Blanchin S."/>
            <person name="Beckerich J.-M."/>
            <person name="Beyne E."/>
            <person name="Bleykasten C."/>
            <person name="Boisrame A."/>
            <person name="Boyer J."/>
            <person name="Cattolico L."/>
            <person name="Confanioleri F."/>
            <person name="de Daruvar A."/>
            <person name="Despons L."/>
            <person name="Fabre E."/>
            <person name="Fairhead C."/>
            <person name="Ferry-Dumazet H."/>
            <person name="Groppi A."/>
            <person name="Hantraye F."/>
            <person name="Hennequin C."/>
            <person name="Jauniaux N."/>
            <person name="Joyet P."/>
            <person name="Kachouri R."/>
            <person name="Kerrest A."/>
            <person name="Koszul R."/>
            <person name="Lemaire M."/>
            <person name="Lesur I."/>
            <person name="Ma L."/>
            <person name="Muller H."/>
            <person name="Nicaud J.-M."/>
            <person name="Nikolski M."/>
            <person name="Oztas S."/>
            <person name="Ozier-Kalogeropoulos O."/>
            <person name="Pellenz S."/>
            <person name="Potier S."/>
            <person name="Richard G.-F."/>
            <person name="Straub M.-L."/>
            <person name="Suleau A."/>
            <person name="Swennen D."/>
            <person name="Tekaia F."/>
            <person name="Wesolowski-Louvel M."/>
            <person name="Westhof E."/>
            <person name="Wirth B."/>
            <person name="Zeniou-Meyer M."/>
            <person name="Zivanovic Y."/>
            <person name="Bolotin-Fukuhara M."/>
            <person name="Thierry A."/>
            <person name="Bouchier C."/>
            <person name="Caudron B."/>
            <person name="Scarpelli C."/>
            <person name="Gaillardin C."/>
            <person name="Weissenbach J."/>
            <person name="Wincker P."/>
            <person name="Souciet J.-L."/>
        </authorList>
    </citation>
    <scope>NUCLEOTIDE SEQUENCE [LARGE SCALE GENOMIC DNA]</scope>
    <source>
        <strain>CLIB 122 / E 150</strain>
    </source>
</reference>
<feature type="transit peptide" description="Mitochondrion" evidence="2">
    <location>
        <begin position="1"/>
        <end position="27"/>
    </location>
</feature>
<feature type="chain" id="PRO_0000290600" description="Carbamoyl phosphate synthase arginine-specific small chain" evidence="2">
    <location>
        <begin position="28"/>
        <end position="448"/>
    </location>
</feature>
<feature type="domain" description="Glutamine amidotransferase type-1" evidence="3">
    <location>
        <begin position="224"/>
        <end position="415"/>
    </location>
</feature>
<feature type="active site" description="Nucleophile" evidence="3">
    <location>
        <position position="304"/>
    </location>
</feature>
<feature type="active site" evidence="3">
    <location>
        <position position="388"/>
    </location>
</feature>
<feature type="active site" evidence="3">
    <location>
        <position position="390"/>
    </location>
</feature>
<dbReference type="EC" id="6.3.5.5" evidence="1"/>
<dbReference type="EMBL" id="CR382130">
    <property type="protein sequence ID" value="CAG80716.1"/>
    <property type="molecule type" value="Genomic_DNA"/>
</dbReference>
<dbReference type="RefSeq" id="XP_502528.1">
    <property type="nucleotide sequence ID" value="XM_502528.1"/>
</dbReference>
<dbReference type="SMR" id="Q6C9Y4"/>
<dbReference type="FunCoup" id="Q6C9Y4">
    <property type="interactions" value="371"/>
</dbReference>
<dbReference type="STRING" id="284591.Q6C9Y4"/>
<dbReference type="EnsemblFungi" id="CAG80716">
    <property type="protein sequence ID" value="CAG80716"/>
    <property type="gene ID" value="YALI0_D07370g"/>
</dbReference>
<dbReference type="KEGG" id="yli:2910891"/>
<dbReference type="VEuPathDB" id="FungiDB:YALI0_D07370g"/>
<dbReference type="HOGENOM" id="CLU_035901_1_0_1"/>
<dbReference type="InParanoid" id="Q6C9Y4"/>
<dbReference type="OMA" id="CFSVQYH"/>
<dbReference type="OrthoDB" id="76546at4891"/>
<dbReference type="UniPathway" id="UPA00068">
    <property type="reaction ID" value="UER00171"/>
</dbReference>
<dbReference type="Proteomes" id="UP000001300">
    <property type="component" value="Chromosome D"/>
</dbReference>
<dbReference type="GO" id="GO:0005951">
    <property type="term" value="C:carbamoyl-phosphate synthase complex"/>
    <property type="evidence" value="ECO:0000318"/>
    <property type="project" value="GO_Central"/>
</dbReference>
<dbReference type="GO" id="GO:0005737">
    <property type="term" value="C:cytoplasm"/>
    <property type="evidence" value="ECO:0000318"/>
    <property type="project" value="GO_Central"/>
</dbReference>
<dbReference type="GO" id="GO:0005759">
    <property type="term" value="C:mitochondrial matrix"/>
    <property type="evidence" value="ECO:0007669"/>
    <property type="project" value="UniProtKB-SubCell"/>
</dbReference>
<dbReference type="GO" id="GO:0005524">
    <property type="term" value="F:ATP binding"/>
    <property type="evidence" value="ECO:0007669"/>
    <property type="project" value="UniProtKB-KW"/>
</dbReference>
<dbReference type="GO" id="GO:0004088">
    <property type="term" value="F:carbamoyl-phosphate synthase (glutamine-hydrolyzing) activity"/>
    <property type="evidence" value="ECO:0007669"/>
    <property type="project" value="UniProtKB-EC"/>
</dbReference>
<dbReference type="GO" id="GO:0004359">
    <property type="term" value="F:glutaminase activity"/>
    <property type="evidence" value="ECO:0007669"/>
    <property type="project" value="RHEA"/>
</dbReference>
<dbReference type="GO" id="GO:0006207">
    <property type="term" value="P:'de novo' pyrimidine nucleobase biosynthetic process"/>
    <property type="evidence" value="ECO:0007669"/>
    <property type="project" value="InterPro"/>
</dbReference>
<dbReference type="GO" id="GO:0006541">
    <property type="term" value="P:glutamine metabolic process"/>
    <property type="evidence" value="ECO:0007669"/>
    <property type="project" value="InterPro"/>
</dbReference>
<dbReference type="GO" id="GO:0006526">
    <property type="term" value="P:L-arginine biosynthetic process"/>
    <property type="evidence" value="ECO:0000318"/>
    <property type="project" value="GO_Central"/>
</dbReference>
<dbReference type="GO" id="GO:0006221">
    <property type="term" value="P:pyrimidine nucleotide biosynthetic process"/>
    <property type="evidence" value="ECO:0007669"/>
    <property type="project" value="EnsemblFungi"/>
</dbReference>
<dbReference type="CDD" id="cd01744">
    <property type="entry name" value="GATase1_CPSase"/>
    <property type="match status" value="1"/>
</dbReference>
<dbReference type="FunFam" id="3.40.50.880:FF:000016">
    <property type="entry name" value="Carbamoyl-phosphate synthase arginine-specific small chain"/>
    <property type="match status" value="1"/>
</dbReference>
<dbReference type="FunFam" id="3.50.30.20:FF:000003">
    <property type="entry name" value="Carbamoyl-phosphate synthase arginine-specific small chain"/>
    <property type="match status" value="1"/>
</dbReference>
<dbReference type="Gene3D" id="3.40.50.880">
    <property type="match status" value="1"/>
</dbReference>
<dbReference type="Gene3D" id="3.50.30.20">
    <property type="entry name" value="Carbamoyl-phosphate synthase small subunit, N-terminal domain"/>
    <property type="match status" value="1"/>
</dbReference>
<dbReference type="HAMAP" id="MF_01209">
    <property type="entry name" value="CPSase_S_chain"/>
    <property type="match status" value="1"/>
</dbReference>
<dbReference type="InterPro" id="IPR050472">
    <property type="entry name" value="Anth_synth/Amidotransfase"/>
</dbReference>
<dbReference type="InterPro" id="IPR006274">
    <property type="entry name" value="CarbamoylP_synth_ssu"/>
</dbReference>
<dbReference type="InterPro" id="IPR002474">
    <property type="entry name" value="CarbamoylP_synth_ssu_N"/>
</dbReference>
<dbReference type="InterPro" id="IPR036480">
    <property type="entry name" value="CarbP_synth_ssu_N_sf"/>
</dbReference>
<dbReference type="InterPro" id="IPR029062">
    <property type="entry name" value="Class_I_gatase-like"/>
</dbReference>
<dbReference type="InterPro" id="IPR035686">
    <property type="entry name" value="CPSase_GATase1"/>
</dbReference>
<dbReference type="InterPro" id="IPR017926">
    <property type="entry name" value="GATASE"/>
</dbReference>
<dbReference type="NCBIfam" id="TIGR01368">
    <property type="entry name" value="CPSaseIIsmall"/>
    <property type="match status" value="1"/>
</dbReference>
<dbReference type="NCBIfam" id="NF009475">
    <property type="entry name" value="PRK12838.1"/>
    <property type="match status" value="1"/>
</dbReference>
<dbReference type="PANTHER" id="PTHR43418:SF7">
    <property type="entry name" value="CARBAMOYL-PHOSPHATE SYNTHASE SMALL CHAIN"/>
    <property type="match status" value="1"/>
</dbReference>
<dbReference type="PANTHER" id="PTHR43418">
    <property type="entry name" value="MULTIFUNCTIONAL TRYPTOPHAN BIOSYNTHESIS PROTEIN-RELATED"/>
    <property type="match status" value="1"/>
</dbReference>
<dbReference type="Pfam" id="PF00988">
    <property type="entry name" value="CPSase_sm_chain"/>
    <property type="match status" value="1"/>
</dbReference>
<dbReference type="Pfam" id="PF00117">
    <property type="entry name" value="GATase"/>
    <property type="match status" value="1"/>
</dbReference>
<dbReference type="PRINTS" id="PR00099">
    <property type="entry name" value="CPSGATASE"/>
</dbReference>
<dbReference type="PRINTS" id="PR00096">
    <property type="entry name" value="GATASE"/>
</dbReference>
<dbReference type="SMART" id="SM01097">
    <property type="entry name" value="CPSase_sm_chain"/>
    <property type="match status" value="1"/>
</dbReference>
<dbReference type="SUPFAM" id="SSF52021">
    <property type="entry name" value="Carbamoyl phosphate synthetase, small subunit N-terminal domain"/>
    <property type="match status" value="1"/>
</dbReference>
<dbReference type="SUPFAM" id="SSF52317">
    <property type="entry name" value="Class I glutamine amidotransferase-like"/>
    <property type="match status" value="1"/>
</dbReference>
<dbReference type="PROSITE" id="PS51273">
    <property type="entry name" value="GATASE_TYPE_1"/>
    <property type="match status" value="1"/>
</dbReference>
<keyword id="KW-0028">Amino-acid biosynthesis</keyword>
<keyword id="KW-0055">Arginine biosynthesis</keyword>
<keyword id="KW-0067">ATP-binding</keyword>
<keyword id="KW-0315">Glutamine amidotransferase</keyword>
<keyword id="KW-0436">Ligase</keyword>
<keyword id="KW-0496">Mitochondrion</keyword>
<keyword id="KW-0547">Nucleotide-binding</keyword>
<keyword id="KW-1185">Reference proteome</keyword>
<keyword id="KW-0809">Transit peptide</keyword>
<name>CARA_YARLI</name>
<comment type="function">
    <text evidence="1">Small subunit of the arginine-specific carbamoyl phosphate synthase (CPSase). CPSase catalyzes the formation of carbamoyl phosphate from the ammonia moiety of glutamine, carbonate, and phosphate donated by ATP, the first step of the arginine biosynthetic pathway. The small subunit (glutamine amidotransferase) binds and cleaves glutamine to supply the large subunit with the substrate ammonia.</text>
</comment>
<comment type="catalytic activity">
    <reaction evidence="1">
        <text>hydrogencarbonate + L-glutamine + 2 ATP + H2O = carbamoyl phosphate + L-glutamate + 2 ADP + phosphate + 2 H(+)</text>
        <dbReference type="Rhea" id="RHEA:18633"/>
        <dbReference type="ChEBI" id="CHEBI:15377"/>
        <dbReference type="ChEBI" id="CHEBI:15378"/>
        <dbReference type="ChEBI" id="CHEBI:17544"/>
        <dbReference type="ChEBI" id="CHEBI:29985"/>
        <dbReference type="ChEBI" id="CHEBI:30616"/>
        <dbReference type="ChEBI" id="CHEBI:43474"/>
        <dbReference type="ChEBI" id="CHEBI:58228"/>
        <dbReference type="ChEBI" id="CHEBI:58359"/>
        <dbReference type="ChEBI" id="CHEBI:456216"/>
        <dbReference type="EC" id="6.3.5.5"/>
    </reaction>
</comment>
<comment type="catalytic activity">
    <molecule>Carbamoyl phosphate synthase arginine-specific small chain</molecule>
    <reaction evidence="1">
        <text>L-glutamine + H2O = L-glutamate + NH4(+)</text>
        <dbReference type="Rhea" id="RHEA:15889"/>
        <dbReference type="ChEBI" id="CHEBI:15377"/>
        <dbReference type="ChEBI" id="CHEBI:28938"/>
        <dbReference type="ChEBI" id="CHEBI:29985"/>
        <dbReference type="ChEBI" id="CHEBI:58359"/>
    </reaction>
</comment>
<comment type="pathway">
    <text evidence="1">Amino-acid biosynthesis; L-arginine biosynthesis; carbamoyl phosphate from bicarbonate: step 1/1.</text>
</comment>
<comment type="subunit">
    <text evidence="1">Heterodimer composed of 2 chains; the small (or glutamine) chain promotes the hydrolysis of glutamine to ammonia, which is used by the large (or ammonia) chain to synthesize carbamoyl phosphate.</text>
</comment>
<comment type="subcellular location">
    <subcellularLocation>
        <location evidence="1">Mitochondrion matrix</location>
    </subcellularLocation>
</comment>
<comment type="similarity">
    <text evidence="4">Belongs to the CarA family.</text>
</comment>
<accession>Q6C9Y4</accession>
<organism>
    <name type="scientific">Yarrowia lipolytica (strain CLIB 122 / E 150)</name>
    <name type="common">Yeast</name>
    <name type="synonym">Candida lipolytica</name>
    <dbReference type="NCBI Taxonomy" id="284591"/>
    <lineage>
        <taxon>Eukaryota</taxon>
        <taxon>Fungi</taxon>
        <taxon>Dikarya</taxon>
        <taxon>Ascomycota</taxon>
        <taxon>Saccharomycotina</taxon>
        <taxon>Dipodascomycetes</taxon>
        <taxon>Dipodascales</taxon>
        <taxon>Dipodascales incertae sedis</taxon>
        <taxon>Yarrowia</taxon>
    </lineage>
</organism>